<comment type="function">
    <text evidence="1">Catalyzes the GTP-dependent ribosomal translocation step during translation elongation. During this step, the ribosome changes from the pre-translocational (PRE) to the post-translocational (POST) state as the newly formed A-site-bound peptidyl-tRNA and P-site-bound deacylated tRNA move to the P and E sites, respectively. Catalyzes the coordinated movement of the two tRNA molecules, the mRNA and conformational changes in the ribosome (By similarity).</text>
</comment>
<comment type="subcellular location">
    <subcellularLocation>
        <location evidence="1">Cytoplasm</location>
    </subcellularLocation>
</comment>
<comment type="similarity">
    <text evidence="2">Belongs to the TRAFAC class translation factor GTPase superfamily. Classic translation factor GTPase family. EF-G/EF-2 subfamily.</text>
</comment>
<sequence length="692" mass="76889">MAREFSLENTRNIGIMAHIDAGKTTTTERILFYTGRIHKIGETHEGASQMDWMEQEQERGITITSAATTAQWKNNRINIIDTPGHVDFTVEVERSLRVLDGAVAVLDAQSGVEPQTETVWRQATTYGVPRVVFVNKMDKTGADFLYSVSTLHDRLQANAHPIQLPIGAEDNFEGIIDLVDMVAYFYEDDLGTRTEAKEIPDEYKEQAQEYHEKLVEAAAELDEELMMKYLEGEELTKDELKAAIRKGTCNVEFYPVLCGSAFKNKGVQLMLDAVLDYLPSPLDVPAIKGHVPDTEEEAVRKPGDDQPFAALAFKVMTDPYVGKLTFFRVYSGTLDSGSYVKNSTKDKRERVGRILQMHANHREEISTVYSGDIAAAVGLKDTSTGDTLCDEKNLVILESMEFPEPVIHLSVEPKSKADQDKMGLALAKLAEEDPTFKTHTDEETGQTIIAGMGELHLDIIVDRLRREFKVEANVGAPQVSYRETIRQAAQVEGKFVRQSGGRGQYGHVWIEFSPNEEGAGFEFVNGIVGGVVPREYIPSVQAGLEEALENGLLAGYPVIDIKAKLFDGSYHDVDSSEMAFKIAASMALKNAKSKCNPVLLEPMMKVEVVVPEEYMGDVMGDITSRRGRVEGMEARGNAQVVKAFVPLAEMFGYATSLRSRTQGRGTYTMFFDHYEEVPKSISEEIIKKNSGE</sequence>
<protein>
    <recommendedName>
        <fullName>Elongation factor G</fullName>
        <shortName>EF-G</shortName>
    </recommendedName>
</protein>
<dbReference type="EMBL" id="AB017508">
    <property type="protein sequence ID" value="BAA75268.1"/>
    <property type="molecule type" value="Genomic_DNA"/>
</dbReference>
<dbReference type="EMBL" id="BA000004">
    <property type="protein sequence ID" value="BAB03850.1"/>
    <property type="molecule type" value="Genomic_DNA"/>
</dbReference>
<dbReference type="PIR" id="C83666">
    <property type="entry name" value="C83666"/>
</dbReference>
<dbReference type="PIR" id="T44380">
    <property type="entry name" value="T44380"/>
</dbReference>
<dbReference type="RefSeq" id="WP_010896314.1">
    <property type="nucleotide sequence ID" value="NC_002570.2"/>
</dbReference>
<dbReference type="SMR" id="Q9Z9L7"/>
<dbReference type="STRING" id="272558.gene:10725971"/>
<dbReference type="KEGG" id="bha:BH0131"/>
<dbReference type="eggNOG" id="COG0480">
    <property type="taxonomic scope" value="Bacteria"/>
</dbReference>
<dbReference type="HOGENOM" id="CLU_002794_4_1_9"/>
<dbReference type="OrthoDB" id="9804431at2"/>
<dbReference type="Proteomes" id="UP000001258">
    <property type="component" value="Chromosome"/>
</dbReference>
<dbReference type="GO" id="GO:0005737">
    <property type="term" value="C:cytoplasm"/>
    <property type="evidence" value="ECO:0007669"/>
    <property type="project" value="UniProtKB-SubCell"/>
</dbReference>
<dbReference type="GO" id="GO:0005525">
    <property type="term" value="F:GTP binding"/>
    <property type="evidence" value="ECO:0007669"/>
    <property type="project" value="UniProtKB-UniRule"/>
</dbReference>
<dbReference type="GO" id="GO:0003924">
    <property type="term" value="F:GTPase activity"/>
    <property type="evidence" value="ECO:0007669"/>
    <property type="project" value="InterPro"/>
</dbReference>
<dbReference type="GO" id="GO:0003746">
    <property type="term" value="F:translation elongation factor activity"/>
    <property type="evidence" value="ECO:0007669"/>
    <property type="project" value="UniProtKB-UniRule"/>
</dbReference>
<dbReference type="GO" id="GO:0032790">
    <property type="term" value="P:ribosome disassembly"/>
    <property type="evidence" value="ECO:0007669"/>
    <property type="project" value="TreeGrafter"/>
</dbReference>
<dbReference type="CDD" id="cd01886">
    <property type="entry name" value="EF-G"/>
    <property type="match status" value="1"/>
</dbReference>
<dbReference type="CDD" id="cd16262">
    <property type="entry name" value="EFG_III"/>
    <property type="match status" value="1"/>
</dbReference>
<dbReference type="CDD" id="cd01434">
    <property type="entry name" value="EFG_mtEFG1_IV"/>
    <property type="match status" value="1"/>
</dbReference>
<dbReference type="CDD" id="cd03713">
    <property type="entry name" value="EFG_mtEFG_C"/>
    <property type="match status" value="1"/>
</dbReference>
<dbReference type="CDD" id="cd04088">
    <property type="entry name" value="EFG_mtEFG_II"/>
    <property type="match status" value="1"/>
</dbReference>
<dbReference type="FunFam" id="2.40.30.10:FF:000006">
    <property type="entry name" value="Elongation factor G"/>
    <property type="match status" value="1"/>
</dbReference>
<dbReference type="FunFam" id="3.30.230.10:FF:000003">
    <property type="entry name" value="Elongation factor G"/>
    <property type="match status" value="1"/>
</dbReference>
<dbReference type="FunFam" id="3.30.70.240:FF:000001">
    <property type="entry name" value="Elongation factor G"/>
    <property type="match status" value="1"/>
</dbReference>
<dbReference type="FunFam" id="3.30.70.870:FF:000001">
    <property type="entry name" value="Elongation factor G"/>
    <property type="match status" value="1"/>
</dbReference>
<dbReference type="FunFam" id="3.40.50.300:FF:000029">
    <property type="entry name" value="Elongation factor G"/>
    <property type="match status" value="1"/>
</dbReference>
<dbReference type="Gene3D" id="3.30.230.10">
    <property type="match status" value="1"/>
</dbReference>
<dbReference type="Gene3D" id="3.30.70.240">
    <property type="match status" value="1"/>
</dbReference>
<dbReference type="Gene3D" id="3.30.70.870">
    <property type="entry name" value="Elongation Factor G (Translational Gtpase), domain 3"/>
    <property type="match status" value="1"/>
</dbReference>
<dbReference type="Gene3D" id="3.40.50.300">
    <property type="entry name" value="P-loop containing nucleotide triphosphate hydrolases"/>
    <property type="match status" value="1"/>
</dbReference>
<dbReference type="Gene3D" id="2.40.30.10">
    <property type="entry name" value="Translation factors"/>
    <property type="match status" value="1"/>
</dbReference>
<dbReference type="HAMAP" id="MF_00054_B">
    <property type="entry name" value="EF_G_EF_2_B"/>
    <property type="match status" value="1"/>
</dbReference>
<dbReference type="InterPro" id="IPR041095">
    <property type="entry name" value="EFG_II"/>
</dbReference>
<dbReference type="InterPro" id="IPR009022">
    <property type="entry name" value="EFG_III"/>
</dbReference>
<dbReference type="InterPro" id="IPR035647">
    <property type="entry name" value="EFG_III/V"/>
</dbReference>
<dbReference type="InterPro" id="IPR047872">
    <property type="entry name" value="EFG_IV"/>
</dbReference>
<dbReference type="InterPro" id="IPR035649">
    <property type="entry name" value="EFG_V"/>
</dbReference>
<dbReference type="InterPro" id="IPR000640">
    <property type="entry name" value="EFG_V-like"/>
</dbReference>
<dbReference type="InterPro" id="IPR004161">
    <property type="entry name" value="EFTu-like_2"/>
</dbReference>
<dbReference type="InterPro" id="IPR031157">
    <property type="entry name" value="G_TR_CS"/>
</dbReference>
<dbReference type="InterPro" id="IPR027417">
    <property type="entry name" value="P-loop_NTPase"/>
</dbReference>
<dbReference type="InterPro" id="IPR020568">
    <property type="entry name" value="Ribosomal_Su5_D2-typ_SF"/>
</dbReference>
<dbReference type="InterPro" id="IPR014721">
    <property type="entry name" value="Ribsml_uS5_D2-typ_fold_subgr"/>
</dbReference>
<dbReference type="InterPro" id="IPR005225">
    <property type="entry name" value="Small_GTP-bd"/>
</dbReference>
<dbReference type="InterPro" id="IPR000795">
    <property type="entry name" value="T_Tr_GTP-bd_dom"/>
</dbReference>
<dbReference type="InterPro" id="IPR009000">
    <property type="entry name" value="Transl_B-barrel_sf"/>
</dbReference>
<dbReference type="InterPro" id="IPR004540">
    <property type="entry name" value="Transl_elong_EFG/EF2"/>
</dbReference>
<dbReference type="InterPro" id="IPR005517">
    <property type="entry name" value="Transl_elong_EFG/EF2_IV"/>
</dbReference>
<dbReference type="NCBIfam" id="TIGR00484">
    <property type="entry name" value="EF-G"/>
    <property type="match status" value="1"/>
</dbReference>
<dbReference type="NCBIfam" id="NF009379">
    <property type="entry name" value="PRK12740.1-3"/>
    <property type="match status" value="1"/>
</dbReference>
<dbReference type="NCBIfam" id="NF009381">
    <property type="entry name" value="PRK12740.1-5"/>
    <property type="match status" value="1"/>
</dbReference>
<dbReference type="NCBIfam" id="TIGR00231">
    <property type="entry name" value="small_GTP"/>
    <property type="match status" value="1"/>
</dbReference>
<dbReference type="PANTHER" id="PTHR43261:SF1">
    <property type="entry name" value="RIBOSOME-RELEASING FACTOR 2, MITOCHONDRIAL"/>
    <property type="match status" value="1"/>
</dbReference>
<dbReference type="PANTHER" id="PTHR43261">
    <property type="entry name" value="TRANSLATION ELONGATION FACTOR G-RELATED"/>
    <property type="match status" value="1"/>
</dbReference>
<dbReference type="Pfam" id="PF00679">
    <property type="entry name" value="EFG_C"/>
    <property type="match status" value="1"/>
</dbReference>
<dbReference type="Pfam" id="PF14492">
    <property type="entry name" value="EFG_III"/>
    <property type="match status" value="1"/>
</dbReference>
<dbReference type="Pfam" id="PF03764">
    <property type="entry name" value="EFG_IV"/>
    <property type="match status" value="1"/>
</dbReference>
<dbReference type="Pfam" id="PF00009">
    <property type="entry name" value="GTP_EFTU"/>
    <property type="match status" value="1"/>
</dbReference>
<dbReference type="Pfam" id="PF03144">
    <property type="entry name" value="GTP_EFTU_D2"/>
    <property type="match status" value="1"/>
</dbReference>
<dbReference type="PRINTS" id="PR00315">
    <property type="entry name" value="ELONGATNFCT"/>
</dbReference>
<dbReference type="SMART" id="SM00838">
    <property type="entry name" value="EFG_C"/>
    <property type="match status" value="1"/>
</dbReference>
<dbReference type="SMART" id="SM00889">
    <property type="entry name" value="EFG_IV"/>
    <property type="match status" value="1"/>
</dbReference>
<dbReference type="SUPFAM" id="SSF54980">
    <property type="entry name" value="EF-G C-terminal domain-like"/>
    <property type="match status" value="2"/>
</dbReference>
<dbReference type="SUPFAM" id="SSF52540">
    <property type="entry name" value="P-loop containing nucleoside triphosphate hydrolases"/>
    <property type="match status" value="1"/>
</dbReference>
<dbReference type="SUPFAM" id="SSF54211">
    <property type="entry name" value="Ribosomal protein S5 domain 2-like"/>
    <property type="match status" value="1"/>
</dbReference>
<dbReference type="SUPFAM" id="SSF50447">
    <property type="entry name" value="Translation proteins"/>
    <property type="match status" value="1"/>
</dbReference>
<dbReference type="PROSITE" id="PS00301">
    <property type="entry name" value="G_TR_1"/>
    <property type="match status" value="1"/>
</dbReference>
<dbReference type="PROSITE" id="PS51722">
    <property type="entry name" value="G_TR_2"/>
    <property type="match status" value="1"/>
</dbReference>
<proteinExistence type="inferred from homology"/>
<accession>Q9Z9L7</accession>
<accession>Q9KGD9</accession>
<gene>
    <name type="primary">fusA</name>
    <name type="synonym">fus</name>
    <name type="ordered locus">BH0131</name>
</gene>
<organism>
    <name type="scientific">Halalkalibacterium halodurans (strain ATCC BAA-125 / DSM 18197 / FERM 7344 / JCM 9153 / C-125)</name>
    <name type="common">Bacillus halodurans</name>
    <dbReference type="NCBI Taxonomy" id="272558"/>
    <lineage>
        <taxon>Bacteria</taxon>
        <taxon>Bacillati</taxon>
        <taxon>Bacillota</taxon>
        <taxon>Bacilli</taxon>
        <taxon>Bacillales</taxon>
        <taxon>Bacillaceae</taxon>
        <taxon>Halalkalibacterium (ex Joshi et al. 2022)</taxon>
    </lineage>
</organism>
<reference key="1">
    <citation type="journal article" date="1999" name="Biosci. Biotechnol. Biochem.">
        <title>Sequence analysis of a 32-kb region including the major ribosomal protein gene clusters from alkaliphilic Bacillus sp. strain C-125.</title>
        <authorList>
            <person name="Takami H."/>
            <person name="Takaki Y."/>
            <person name="Nakasone K."/>
            <person name="Hirama C."/>
            <person name="Inoue A."/>
            <person name="Horikoshi K."/>
        </authorList>
    </citation>
    <scope>NUCLEOTIDE SEQUENCE [GENOMIC DNA]</scope>
    <source>
        <strain>ATCC BAA-125 / DSM 18197 / FERM 7344 / JCM 9153 / C-125</strain>
    </source>
</reference>
<reference key="2">
    <citation type="journal article" date="2000" name="Nucleic Acids Res.">
        <title>Complete genome sequence of the alkaliphilic bacterium Bacillus halodurans and genomic sequence comparison with Bacillus subtilis.</title>
        <authorList>
            <person name="Takami H."/>
            <person name="Nakasone K."/>
            <person name="Takaki Y."/>
            <person name="Maeno G."/>
            <person name="Sasaki R."/>
            <person name="Masui N."/>
            <person name="Fuji F."/>
            <person name="Hirama C."/>
            <person name="Nakamura Y."/>
            <person name="Ogasawara N."/>
            <person name="Kuhara S."/>
            <person name="Horikoshi K."/>
        </authorList>
    </citation>
    <scope>NUCLEOTIDE SEQUENCE [LARGE SCALE GENOMIC DNA]</scope>
    <source>
        <strain>ATCC BAA-125 / DSM 18197 / FERM 7344 / JCM 9153 / C-125</strain>
    </source>
</reference>
<feature type="chain" id="PRO_0000091066" description="Elongation factor G">
    <location>
        <begin position="1"/>
        <end position="692"/>
    </location>
</feature>
<feature type="domain" description="tr-type G">
    <location>
        <begin position="8"/>
        <end position="282"/>
    </location>
</feature>
<feature type="binding site" evidence="1">
    <location>
        <begin position="17"/>
        <end position="24"/>
    </location>
    <ligand>
        <name>GTP</name>
        <dbReference type="ChEBI" id="CHEBI:37565"/>
    </ligand>
</feature>
<feature type="binding site" evidence="1">
    <location>
        <begin position="81"/>
        <end position="85"/>
    </location>
    <ligand>
        <name>GTP</name>
        <dbReference type="ChEBI" id="CHEBI:37565"/>
    </ligand>
</feature>
<feature type="binding site" evidence="1">
    <location>
        <begin position="135"/>
        <end position="138"/>
    </location>
    <ligand>
        <name>GTP</name>
        <dbReference type="ChEBI" id="CHEBI:37565"/>
    </ligand>
</feature>
<feature type="sequence conflict" description="In Ref. 1; BAA75268." evidence="2" ref="1">
    <original>Q</original>
    <variation>H</variation>
    <location>
        <position position="115"/>
    </location>
</feature>
<name>EFG_HALH5</name>
<evidence type="ECO:0000250" key="1"/>
<evidence type="ECO:0000305" key="2"/>
<keyword id="KW-0963">Cytoplasm</keyword>
<keyword id="KW-0251">Elongation factor</keyword>
<keyword id="KW-0342">GTP-binding</keyword>
<keyword id="KW-0547">Nucleotide-binding</keyword>
<keyword id="KW-0648">Protein biosynthesis</keyword>
<keyword id="KW-1185">Reference proteome</keyword>